<evidence type="ECO:0000250" key="1"/>
<evidence type="ECO:0000255" key="2"/>
<evidence type="ECO:0000255" key="3">
    <source>
        <dbReference type="PROSITE-ProRule" id="PRU00078"/>
    </source>
</evidence>
<evidence type="ECO:0000255" key="4">
    <source>
        <dbReference type="PROSITE-ProRule" id="PRU00079"/>
    </source>
</evidence>
<evidence type="ECO:0000269" key="5">
    <source>
    </source>
</evidence>
<evidence type="ECO:0000305" key="6"/>
<feature type="signal peptide" evidence="2">
    <location>
        <begin position="1"/>
        <end position="28"/>
    </location>
</feature>
<feature type="chain" id="PRO_0000252008" description="Expansin-A29">
    <location>
        <begin position="29"/>
        <end position="263"/>
    </location>
</feature>
<feature type="domain" description="Expansin-like EG45" evidence="4">
    <location>
        <begin position="52"/>
        <end position="167"/>
    </location>
</feature>
<feature type="domain" description="Expansin-like CBD" evidence="3">
    <location>
        <begin position="177"/>
        <end position="258"/>
    </location>
</feature>
<sequence length="263" mass="28037">MARRGHVFAVVAFVSYALLAAASTTVEAFAASGWSKGTATFYGGSDASGTMGGACGYGNLYTQGYGTRTAALSTALFDDGASCGQCYALTCDARADPRWCRAGASVTVTATNFCPPNYALPSDDGGWCNPPRPHFDMAQPAWERIGVYRGGIVPVAFRRVPCRRRGGVRFTVAGRDYFELVLVTNVAAAGSVRSMEVRGSRRGAGWMAMSRNWGANWQSLAYLDGQGLSFRVTATDGQTIVFAGVVPPSWRFGQTFASTQQFM</sequence>
<reference key="1">
    <citation type="journal article" date="2005" name="Nature">
        <title>The map-based sequence of the rice genome.</title>
        <authorList>
            <consortium name="International rice genome sequencing project (IRGSP)"/>
        </authorList>
    </citation>
    <scope>NUCLEOTIDE SEQUENCE [LARGE SCALE GENOMIC DNA]</scope>
    <source>
        <strain>cv. Nipponbare</strain>
    </source>
</reference>
<reference key="2">
    <citation type="journal article" date="2008" name="Nucleic Acids Res.">
        <title>The rice annotation project database (RAP-DB): 2008 update.</title>
        <authorList>
            <consortium name="The rice annotation project (RAP)"/>
        </authorList>
    </citation>
    <scope>GENOME REANNOTATION</scope>
    <source>
        <strain>cv. Nipponbare</strain>
    </source>
</reference>
<reference key="3">
    <citation type="journal article" date="2013" name="Rice">
        <title>Improvement of the Oryza sativa Nipponbare reference genome using next generation sequence and optical map data.</title>
        <authorList>
            <person name="Kawahara Y."/>
            <person name="de la Bastide M."/>
            <person name="Hamilton J.P."/>
            <person name="Kanamori H."/>
            <person name="McCombie W.R."/>
            <person name="Ouyang S."/>
            <person name="Schwartz D.C."/>
            <person name="Tanaka T."/>
            <person name="Wu J."/>
            <person name="Zhou S."/>
            <person name="Childs K.L."/>
            <person name="Davidson R.M."/>
            <person name="Lin H."/>
            <person name="Quesada-Ocampo L."/>
            <person name="Vaillancourt B."/>
            <person name="Sakai H."/>
            <person name="Lee S.S."/>
            <person name="Kim J."/>
            <person name="Numa H."/>
            <person name="Itoh T."/>
            <person name="Buell C.R."/>
            <person name="Matsumoto T."/>
        </authorList>
    </citation>
    <scope>GENOME REANNOTATION</scope>
    <source>
        <strain>cv. Nipponbare</strain>
    </source>
</reference>
<reference key="4">
    <citation type="journal article" date="2003" name="Science">
        <title>Collection, mapping, and annotation of over 28,000 cDNA clones from japonica rice.</title>
        <authorList>
            <consortium name="The rice full-length cDNA consortium"/>
        </authorList>
    </citation>
    <scope>NUCLEOTIDE SEQUENCE [LARGE SCALE MRNA]</scope>
    <source>
        <strain>cv. Nipponbare</strain>
    </source>
</reference>
<reference key="5">
    <citation type="journal article" date="2002" name="Plant Physiol.">
        <title>Expression of alpha-expansin and expansin-like genes in deepwater rice.</title>
        <authorList>
            <person name="Lee Y."/>
            <person name="Kende H."/>
        </authorList>
    </citation>
    <scope>NUCLEOTIDE SEQUENCE [GENOMIC DNA] OF 1-137</scope>
</reference>
<reference key="6">
    <citation type="journal article" date="2005" name="Mol. Cells">
        <title>Characterization and transcriptional expression of the alpha-expansin gene family in rice.</title>
        <authorList>
            <person name="Shin J.-H."/>
            <person name="Jeong D.-H."/>
            <person name="Park M.C."/>
            <person name="An G."/>
        </authorList>
    </citation>
    <scope>NUCLEOTIDE SEQUENCE [MRNA] OF 25-259</scope>
    <scope>TISSUE SPECIFICITY</scope>
    <source>
        <strain>cv. Dongjin</strain>
    </source>
</reference>
<reference key="7">
    <citation type="journal article" date="2004" name="Plant Mol. Biol.">
        <title>Nomenclature for members of the expansin superfamily of genes and proteins.</title>
        <authorList>
            <person name="Kende H."/>
            <person name="Bradford K.J."/>
            <person name="Brummell D.A."/>
            <person name="Cho H.-T."/>
            <person name="Cosgrove D.J."/>
            <person name="Fleming A.J."/>
            <person name="Gehring C."/>
            <person name="Lee Y."/>
            <person name="McQueen-Mason S.J."/>
            <person name="Rose J.K.C."/>
            <person name="Voesenek L.A.C."/>
        </authorList>
    </citation>
    <scope>NOMENCLATURE</scope>
</reference>
<gene>
    <name type="primary">EXPA29</name>
    <name type="synonym">EXP29</name>
    <name type="ordered locus">Os06g0718100</name>
    <name type="ordered locus">LOC_Os06g50400</name>
    <name type="ORF">OJ1540_H01.14</name>
    <name type="ORF">P0541C02.22</name>
</gene>
<proteinExistence type="evidence at transcript level"/>
<name>EXP29_ORYSJ</name>
<organism>
    <name type="scientific">Oryza sativa subsp. japonica</name>
    <name type="common">Rice</name>
    <dbReference type="NCBI Taxonomy" id="39947"/>
    <lineage>
        <taxon>Eukaryota</taxon>
        <taxon>Viridiplantae</taxon>
        <taxon>Streptophyta</taxon>
        <taxon>Embryophyta</taxon>
        <taxon>Tracheophyta</taxon>
        <taxon>Spermatophyta</taxon>
        <taxon>Magnoliopsida</taxon>
        <taxon>Liliopsida</taxon>
        <taxon>Poales</taxon>
        <taxon>Poaceae</taxon>
        <taxon>BOP clade</taxon>
        <taxon>Oryzoideae</taxon>
        <taxon>Oryzeae</taxon>
        <taxon>Oryzinae</taxon>
        <taxon>Oryza</taxon>
        <taxon>Oryza sativa</taxon>
    </lineage>
</organism>
<dbReference type="EMBL" id="AC091774">
    <property type="protein sequence ID" value="AAL79710.1"/>
    <property type="molecule type" value="Genomic_DNA"/>
</dbReference>
<dbReference type="EMBL" id="AP003769">
    <property type="protein sequence ID" value="BAD61725.1"/>
    <property type="molecule type" value="Genomic_DNA"/>
</dbReference>
<dbReference type="EMBL" id="AP008212">
    <property type="protein sequence ID" value="BAF20513.1"/>
    <property type="molecule type" value="Genomic_DNA"/>
</dbReference>
<dbReference type="EMBL" id="AP014962">
    <property type="protein sequence ID" value="BAS99525.1"/>
    <property type="molecule type" value="Genomic_DNA"/>
</dbReference>
<dbReference type="EMBL" id="AK070133">
    <property type="protein sequence ID" value="BAG91786.1"/>
    <property type="molecule type" value="mRNA"/>
</dbReference>
<dbReference type="EMBL" id="AF394562">
    <property type="protein sequence ID" value="AAM73778.1"/>
    <property type="molecule type" value="Genomic_DNA"/>
</dbReference>
<dbReference type="EMBL" id="DQ061068">
    <property type="protein sequence ID" value="AAY63559.1"/>
    <property type="molecule type" value="mRNA"/>
</dbReference>
<dbReference type="RefSeq" id="XP_015642522.1">
    <property type="nucleotide sequence ID" value="XM_015787036.1"/>
</dbReference>
<dbReference type="SMR" id="Q4PR39"/>
<dbReference type="FunCoup" id="Q4PR39">
    <property type="interactions" value="11"/>
</dbReference>
<dbReference type="STRING" id="39947.Q4PR39"/>
<dbReference type="PaxDb" id="39947-Q4PR39"/>
<dbReference type="EnsemblPlants" id="Os06t0718100-01">
    <property type="protein sequence ID" value="Os06t0718100-01"/>
    <property type="gene ID" value="Os06g0718100"/>
</dbReference>
<dbReference type="Gramene" id="Os06t0718100-01">
    <property type="protein sequence ID" value="Os06t0718100-01"/>
    <property type="gene ID" value="Os06g0718100"/>
</dbReference>
<dbReference type="KEGG" id="dosa:Os06g0718100"/>
<dbReference type="eggNOG" id="ENOG502QVVV">
    <property type="taxonomic scope" value="Eukaryota"/>
</dbReference>
<dbReference type="HOGENOM" id="CLU_027462_0_1_1"/>
<dbReference type="InParanoid" id="Q4PR39"/>
<dbReference type="OMA" id="NSEYHIS"/>
<dbReference type="OrthoDB" id="5823761at2759"/>
<dbReference type="Proteomes" id="UP000000763">
    <property type="component" value="Chromosome 6"/>
</dbReference>
<dbReference type="Proteomes" id="UP000059680">
    <property type="component" value="Chromosome 6"/>
</dbReference>
<dbReference type="GO" id="GO:0005576">
    <property type="term" value="C:extracellular region"/>
    <property type="evidence" value="ECO:0007669"/>
    <property type="project" value="UniProtKB-KW"/>
</dbReference>
<dbReference type="GO" id="GO:0016020">
    <property type="term" value="C:membrane"/>
    <property type="evidence" value="ECO:0007669"/>
    <property type="project" value="UniProtKB-SubCell"/>
</dbReference>
<dbReference type="GO" id="GO:0009828">
    <property type="term" value="P:plant-type cell wall loosening"/>
    <property type="evidence" value="ECO:0000250"/>
    <property type="project" value="UniProtKB"/>
</dbReference>
<dbReference type="CDD" id="cd22274">
    <property type="entry name" value="DPBB_EXPA_N"/>
    <property type="match status" value="1"/>
</dbReference>
<dbReference type="FunFam" id="2.40.40.10:FF:000001">
    <property type="entry name" value="Expansin"/>
    <property type="match status" value="1"/>
</dbReference>
<dbReference type="Gene3D" id="2.60.40.760">
    <property type="entry name" value="Expansin, cellulose-binding-like domain"/>
    <property type="match status" value="1"/>
</dbReference>
<dbReference type="Gene3D" id="2.40.40.10">
    <property type="entry name" value="RlpA-like domain"/>
    <property type="match status" value="1"/>
</dbReference>
<dbReference type="InterPro" id="IPR007118">
    <property type="entry name" value="Expan_Lol_pI"/>
</dbReference>
<dbReference type="InterPro" id="IPR002963">
    <property type="entry name" value="Expansin"/>
</dbReference>
<dbReference type="InterPro" id="IPR007112">
    <property type="entry name" value="Expansin/allergen_DPBB_dom"/>
</dbReference>
<dbReference type="InterPro" id="IPR007117">
    <property type="entry name" value="Expansin_CBD"/>
</dbReference>
<dbReference type="InterPro" id="IPR036749">
    <property type="entry name" value="Expansin_CBD_sf"/>
</dbReference>
<dbReference type="InterPro" id="IPR009009">
    <property type="entry name" value="RlpA-like_DPBB"/>
</dbReference>
<dbReference type="InterPro" id="IPR036908">
    <property type="entry name" value="RlpA-like_sf"/>
</dbReference>
<dbReference type="PANTHER" id="PTHR31867">
    <property type="entry name" value="EXPANSIN-A15"/>
    <property type="match status" value="1"/>
</dbReference>
<dbReference type="Pfam" id="PF03330">
    <property type="entry name" value="DPBB_1"/>
    <property type="match status" value="1"/>
</dbReference>
<dbReference type="Pfam" id="PF01357">
    <property type="entry name" value="Expansin_C"/>
    <property type="match status" value="1"/>
</dbReference>
<dbReference type="PRINTS" id="PR01226">
    <property type="entry name" value="EXPANSIN"/>
</dbReference>
<dbReference type="PRINTS" id="PR01225">
    <property type="entry name" value="EXPANSNFAMLY"/>
</dbReference>
<dbReference type="SMART" id="SM00837">
    <property type="entry name" value="DPBB_1"/>
    <property type="match status" value="1"/>
</dbReference>
<dbReference type="SUPFAM" id="SSF50685">
    <property type="entry name" value="Barwin-like endoglucanases"/>
    <property type="match status" value="1"/>
</dbReference>
<dbReference type="SUPFAM" id="SSF49590">
    <property type="entry name" value="PHL pollen allergen"/>
    <property type="match status" value="1"/>
</dbReference>
<dbReference type="PROSITE" id="PS50843">
    <property type="entry name" value="EXPANSIN_CBD"/>
    <property type="match status" value="1"/>
</dbReference>
<dbReference type="PROSITE" id="PS50842">
    <property type="entry name" value="EXPANSIN_EG45"/>
    <property type="match status" value="1"/>
</dbReference>
<protein>
    <recommendedName>
        <fullName>Expansin-A29</fullName>
    </recommendedName>
    <alternativeName>
        <fullName>Alpha-expansin-29</fullName>
    </alternativeName>
    <alternativeName>
        <fullName>OsEXP29</fullName>
    </alternativeName>
    <alternativeName>
        <fullName>OsEXPA29</fullName>
    </alternativeName>
    <alternativeName>
        <fullName>OsaEXPa1.14</fullName>
    </alternativeName>
</protein>
<comment type="function">
    <text evidence="1">May cause loosening and extension of plant cell walls by disrupting non-covalent bonding between cellulose microfibrils and matrix glucans. No enzymatic activity has been found. May be required for rapid internodal elongation in deepwater rice during submergence (By similarity).</text>
</comment>
<comment type="subcellular location">
    <subcellularLocation>
        <location evidence="1">Secreted</location>
        <location evidence="1">Cell wall</location>
    </subcellularLocation>
    <subcellularLocation>
        <location evidence="1">Membrane</location>
        <topology evidence="1">Peripheral membrane protein</topology>
    </subcellularLocation>
</comment>
<comment type="tissue specificity">
    <text evidence="5">Expressed in panicles and flowers.</text>
</comment>
<comment type="similarity">
    <text evidence="6">Belongs to the expansin family. Expansin A subfamily.</text>
</comment>
<comment type="online information" name="EXPANSIN homepage">
    <link uri="https://www.dept.psu.edu/biology/groups/expansins/index.htm"/>
</comment>
<accession>Q4PR39</accession>
<accession>Q0D9G0</accession>
<accession>Q5Z8N7</accession>
<accession>Q8LLJ7</accession>
<accession>Q8SB28</accession>
<keyword id="KW-0134">Cell wall</keyword>
<keyword id="KW-0961">Cell wall biogenesis/degradation</keyword>
<keyword id="KW-0472">Membrane</keyword>
<keyword id="KW-1185">Reference proteome</keyword>
<keyword id="KW-0964">Secreted</keyword>
<keyword id="KW-0732">Signal</keyword>